<name>CLPP_DIOEL</name>
<gene>
    <name evidence="1" type="primary">clpP</name>
</gene>
<dbReference type="EC" id="3.4.21.92" evidence="1"/>
<dbReference type="EMBL" id="EF380353">
    <property type="protein sequence ID" value="ABR01454.1"/>
    <property type="molecule type" value="Genomic_DNA"/>
</dbReference>
<dbReference type="RefSeq" id="YP_001294377.1">
    <property type="nucleotide sequence ID" value="NC_009601.1"/>
</dbReference>
<dbReference type="SMR" id="A6MMN2"/>
<dbReference type="MEROPS" id="S14.002"/>
<dbReference type="GeneID" id="5236561"/>
<dbReference type="GO" id="GO:0009570">
    <property type="term" value="C:chloroplast stroma"/>
    <property type="evidence" value="ECO:0007669"/>
    <property type="project" value="UniProtKB-SubCell"/>
</dbReference>
<dbReference type="GO" id="GO:0009368">
    <property type="term" value="C:endopeptidase Clp complex"/>
    <property type="evidence" value="ECO:0007669"/>
    <property type="project" value="TreeGrafter"/>
</dbReference>
<dbReference type="GO" id="GO:0004176">
    <property type="term" value="F:ATP-dependent peptidase activity"/>
    <property type="evidence" value="ECO:0007669"/>
    <property type="project" value="InterPro"/>
</dbReference>
<dbReference type="GO" id="GO:0051117">
    <property type="term" value="F:ATPase binding"/>
    <property type="evidence" value="ECO:0007669"/>
    <property type="project" value="TreeGrafter"/>
</dbReference>
<dbReference type="GO" id="GO:0004252">
    <property type="term" value="F:serine-type endopeptidase activity"/>
    <property type="evidence" value="ECO:0007669"/>
    <property type="project" value="UniProtKB-UniRule"/>
</dbReference>
<dbReference type="GO" id="GO:0006515">
    <property type="term" value="P:protein quality control for misfolded or incompletely synthesized proteins"/>
    <property type="evidence" value="ECO:0007669"/>
    <property type="project" value="TreeGrafter"/>
</dbReference>
<dbReference type="CDD" id="cd07017">
    <property type="entry name" value="S14_ClpP_2"/>
    <property type="match status" value="1"/>
</dbReference>
<dbReference type="FunFam" id="3.90.226.10:FF:000006">
    <property type="entry name" value="ATP-dependent Clp protease proteolytic subunit"/>
    <property type="match status" value="1"/>
</dbReference>
<dbReference type="Gene3D" id="3.90.226.10">
    <property type="entry name" value="2-enoyl-CoA Hydratase, Chain A, domain 1"/>
    <property type="match status" value="1"/>
</dbReference>
<dbReference type="HAMAP" id="MF_00444">
    <property type="entry name" value="ClpP"/>
    <property type="match status" value="1"/>
</dbReference>
<dbReference type="InterPro" id="IPR001907">
    <property type="entry name" value="ClpP"/>
</dbReference>
<dbReference type="InterPro" id="IPR029045">
    <property type="entry name" value="ClpP/crotonase-like_dom_sf"/>
</dbReference>
<dbReference type="InterPro" id="IPR023562">
    <property type="entry name" value="ClpP/TepA"/>
</dbReference>
<dbReference type="InterPro" id="IPR033135">
    <property type="entry name" value="ClpP_His_AS"/>
</dbReference>
<dbReference type="InterPro" id="IPR018215">
    <property type="entry name" value="ClpP_Ser_AS"/>
</dbReference>
<dbReference type="PANTHER" id="PTHR10381">
    <property type="entry name" value="ATP-DEPENDENT CLP PROTEASE PROTEOLYTIC SUBUNIT"/>
    <property type="match status" value="1"/>
</dbReference>
<dbReference type="PANTHER" id="PTHR10381:SF15">
    <property type="entry name" value="CHLOROPLASTIC ATP-DEPENDENT CLP PROTEASE PROTEOLYTIC SUBUNIT 1"/>
    <property type="match status" value="1"/>
</dbReference>
<dbReference type="Pfam" id="PF00574">
    <property type="entry name" value="CLP_protease"/>
    <property type="match status" value="1"/>
</dbReference>
<dbReference type="PRINTS" id="PR00127">
    <property type="entry name" value="CLPPROTEASEP"/>
</dbReference>
<dbReference type="SUPFAM" id="SSF52096">
    <property type="entry name" value="ClpP/crotonase"/>
    <property type="match status" value="1"/>
</dbReference>
<dbReference type="PROSITE" id="PS00382">
    <property type="entry name" value="CLP_PROTEASE_HIS"/>
    <property type="match status" value="1"/>
</dbReference>
<dbReference type="PROSITE" id="PS00381">
    <property type="entry name" value="CLP_PROTEASE_SER"/>
    <property type="match status" value="1"/>
</dbReference>
<sequence>MPIGVPKVPFRSPGEEDAVWVDVNRLHRERLLFLGQEVDNEVSNQLVGLMVYLSIEDATKDLYLFINSPGGWVIPGMAIYDTMQFVSPDVHTICMGLAASMGSLILVGGEITKRLAFPHARVMIHQPASSFYEAQAGEFILEAEELLKLRETLTKVYVQRTGNPLWAVSEDMERDAFMSATEAQAHGIVDLVAVENENTNDFV</sequence>
<geneLocation type="chloroplast"/>
<accession>A6MMN2</accession>
<organism>
    <name type="scientific">Dioscorea elephantipes</name>
    <name type="common">Elephant's foot yam</name>
    <name type="synonym">Testudinaria elephantipes</name>
    <dbReference type="NCBI Taxonomy" id="145284"/>
    <lineage>
        <taxon>Eukaryota</taxon>
        <taxon>Viridiplantae</taxon>
        <taxon>Streptophyta</taxon>
        <taxon>Embryophyta</taxon>
        <taxon>Tracheophyta</taxon>
        <taxon>Spermatophyta</taxon>
        <taxon>Magnoliopsida</taxon>
        <taxon>Liliopsida</taxon>
        <taxon>Dioscoreales</taxon>
        <taxon>Dioscoreaceae</taxon>
        <taxon>Dioscorea</taxon>
    </lineage>
</organism>
<proteinExistence type="inferred from homology"/>
<feature type="chain" id="PRO_0000309299" description="ATP-dependent Clp protease proteolytic subunit">
    <location>
        <begin position="1"/>
        <end position="203"/>
    </location>
</feature>
<feature type="active site" description="Nucleophile" evidence="1">
    <location>
        <position position="100"/>
    </location>
</feature>
<feature type="active site" evidence="1">
    <location>
        <position position="125"/>
    </location>
</feature>
<evidence type="ECO:0000255" key="1">
    <source>
        <dbReference type="HAMAP-Rule" id="MF_00444"/>
    </source>
</evidence>
<comment type="function">
    <text evidence="1">Cleaves peptides in various proteins in a process that requires ATP hydrolysis. Has a chymotrypsin-like activity. Plays a major role in the degradation of misfolded proteins.</text>
</comment>
<comment type="catalytic activity">
    <reaction evidence="1">
        <text>Hydrolysis of proteins to small peptides in the presence of ATP and magnesium. alpha-casein is the usual test substrate. In the absence of ATP, only oligopeptides shorter than five residues are hydrolyzed (such as succinyl-Leu-Tyr-|-NHMec, and Leu-Tyr-Leu-|-Tyr-Trp, in which cleavage of the -Tyr-|-Leu- and -Tyr-|-Trp bonds also occurs).</text>
        <dbReference type="EC" id="3.4.21.92"/>
    </reaction>
</comment>
<comment type="subunit">
    <text>Component of the chloroplastic Clp protease core complex.</text>
</comment>
<comment type="subcellular location">
    <subcellularLocation>
        <location evidence="1">Plastid</location>
        <location evidence="1">Chloroplast stroma</location>
    </subcellularLocation>
</comment>
<comment type="similarity">
    <text evidence="1">Belongs to the peptidase S14 family.</text>
</comment>
<keyword id="KW-0150">Chloroplast</keyword>
<keyword id="KW-0378">Hydrolase</keyword>
<keyword id="KW-0934">Plastid</keyword>
<keyword id="KW-0645">Protease</keyword>
<keyword id="KW-0720">Serine protease</keyword>
<reference key="1">
    <citation type="journal article" date="2007" name="Mol. Phylogenet. Evol.">
        <title>Phylogenetic and evolutionary implications of complete chloroplast genome sequences of four early-diverging angiosperms: Buxus (Buxaceae), Chloranthus (Chloranthaceae), Dioscorea (Dioscoreaceae), and Illicium (Schisandraceae).</title>
        <authorList>
            <person name="Hansen D.R."/>
            <person name="Dastidar S.G."/>
            <person name="Cai Z."/>
            <person name="Penaflor C."/>
            <person name="Kuehl J.V."/>
            <person name="Boore J.L."/>
            <person name="Jansen R.K."/>
        </authorList>
    </citation>
    <scope>NUCLEOTIDE SEQUENCE [LARGE SCALE GENOMIC DNA]</scope>
</reference>
<protein>
    <recommendedName>
        <fullName evidence="1">ATP-dependent Clp protease proteolytic subunit</fullName>
        <ecNumber evidence="1">3.4.21.92</ecNumber>
    </recommendedName>
    <alternativeName>
        <fullName evidence="1">Endopeptidase Clp</fullName>
    </alternativeName>
</protein>